<protein>
    <recommendedName>
        <fullName evidence="1">Large ribosomal subunit protein uL29</fullName>
    </recommendedName>
    <alternativeName>
        <fullName evidence="2">50S ribosomal protein L29</fullName>
    </alternativeName>
</protein>
<proteinExistence type="inferred from homology"/>
<keyword id="KW-0687">Ribonucleoprotein</keyword>
<keyword id="KW-0689">Ribosomal protein</keyword>
<sequence length="64" mass="7312">MKASELLQKDQAALNKELADLLKAQFGLRMQLATQQLTNTSQLKKVRRDIARVRTVMTQKANQK</sequence>
<accession>B1YRN7</accession>
<name>RL29_BURA4</name>
<comment type="similarity">
    <text evidence="1">Belongs to the universal ribosomal protein uL29 family.</text>
</comment>
<organism>
    <name type="scientific">Burkholderia ambifaria (strain MC40-6)</name>
    <dbReference type="NCBI Taxonomy" id="398577"/>
    <lineage>
        <taxon>Bacteria</taxon>
        <taxon>Pseudomonadati</taxon>
        <taxon>Pseudomonadota</taxon>
        <taxon>Betaproteobacteria</taxon>
        <taxon>Burkholderiales</taxon>
        <taxon>Burkholderiaceae</taxon>
        <taxon>Burkholderia</taxon>
        <taxon>Burkholderia cepacia complex</taxon>
    </lineage>
</organism>
<reference key="1">
    <citation type="submission" date="2008-04" db="EMBL/GenBank/DDBJ databases">
        <title>Complete sequence of chromosome 1 of Burkholderia ambifaria MC40-6.</title>
        <authorList>
            <person name="Copeland A."/>
            <person name="Lucas S."/>
            <person name="Lapidus A."/>
            <person name="Glavina del Rio T."/>
            <person name="Dalin E."/>
            <person name="Tice H."/>
            <person name="Pitluck S."/>
            <person name="Chain P."/>
            <person name="Malfatti S."/>
            <person name="Shin M."/>
            <person name="Vergez L."/>
            <person name="Lang D."/>
            <person name="Schmutz J."/>
            <person name="Larimer F."/>
            <person name="Land M."/>
            <person name="Hauser L."/>
            <person name="Kyrpides N."/>
            <person name="Lykidis A."/>
            <person name="Ramette A."/>
            <person name="Konstantinidis K."/>
            <person name="Tiedje J."/>
            <person name="Richardson P."/>
        </authorList>
    </citation>
    <scope>NUCLEOTIDE SEQUENCE [LARGE SCALE GENOMIC DNA]</scope>
    <source>
        <strain>MC40-6</strain>
    </source>
</reference>
<dbReference type="EMBL" id="CP001025">
    <property type="protein sequence ID" value="ACB62785.1"/>
    <property type="molecule type" value="Genomic_DNA"/>
</dbReference>
<dbReference type="RefSeq" id="WP_006400652.1">
    <property type="nucleotide sequence ID" value="NC_010551.1"/>
</dbReference>
<dbReference type="SMR" id="B1YRN7"/>
<dbReference type="GeneID" id="98107152"/>
<dbReference type="KEGG" id="bac:BamMC406_0284"/>
<dbReference type="HOGENOM" id="CLU_158491_1_1_4"/>
<dbReference type="OrthoDB" id="9815192at2"/>
<dbReference type="Proteomes" id="UP000001680">
    <property type="component" value="Chromosome 1"/>
</dbReference>
<dbReference type="GO" id="GO:0022625">
    <property type="term" value="C:cytosolic large ribosomal subunit"/>
    <property type="evidence" value="ECO:0007669"/>
    <property type="project" value="TreeGrafter"/>
</dbReference>
<dbReference type="GO" id="GO:0003735">
    <property type="term" value="F:structural constituent of ribosome"/>
    <property type="evidence" value="ECO:0007669"/>
    <property type="project" value="InterPro"/>
</dbReference>
<dbReference type="GO" id="GO:0006412">
    <property type="term" value="P:translation"/>
    <property type="evidence" value="ECO:0007669"/>
    <property type="project" value="UniProtKB-UniRule"/>
</dbReference>
<dbReference type="CDD" id="cd00427">
    <property type="entry name" value="Ribosomal_L29_HIP"/>
    <property type="match status" value="1"/>
</dbReference>
<dbReference type="FunFam" id="1.10.287.310:FF:000001">
    <property type="entry name" value="50S ribosomal protein L29"/>
    <property type="match status" value="1"/>
</dbReference>
<dbReference type="Gene3D" id="6.10.140.1970">
    <property type="match status" value="1"/>
</dbReference>
<dbReference type="HAMAP" id="MF_00374">
    <property type="entry name" value="Ribosomal_uL29"/>
    <property type="match status" value="1"/>
</dbReference>
<dbReference type="InterPro" id="IPR050063">
    <property type="entry name" value="Ribosomal_protein_uL29"/>
</dbReference>
<dbReference type="InterPro" id="IPR001854">
    <property type="entry name" value="Ribosomal_uL29"/>
</dbReference>
<dbReference type="InterPro" id="IPR018254">
    <property type="entry name" value="Ribosomal_uL29_CS"/>
</dbReference>
<dbReference type="InterPro" id="IPR036049">
    <property type="entry name" value="Ribosomal_uL29_sf"/>
</dbReference>
<dbReference type="NCBIfam" id="TIGR00012">
    <property type="entry name" value="L29"/>
    <property type="match status" value="1"/>
</dbReference>
<dbReference type="PANTHER" id="PTHR10916">
    <property type="entry name" value="60S RIBOSOMAL PROTEIN L35/50S RIBOSOMAL PROTEIN L29"/>
    <property type="match status" value="1"/>
</dbReference>
<dbReference type="PANTHER" id="PTHR10916:SF0">
    <property type="entry name" value="LARGE RIBOSOMAL SUBUNIT PROTEIN UL29C"/>
    <property type="match status" value="1"/>
</dbReference>
<dbReference type="Pfam" id="PF00831">
    <property type="entry name" value="Ribosomal_L29"/>
    <property type="match status" value="1"/>
</dbReference>
<dbReference type="SUPFAM" id="SSF46561">
    <property type="entry name" value="Ribosomal protein L29 (L29p)"/>
    <property type="match status" value="1"/>
</dbReference>
<dbReference type="PROSITE" id="PS00579">
    <property type="entry name" value="RIBOSOMAL_L29"/>
    <property type="match status" value="1"/>
</dbReference>
<evidence type="ECO:0000255" key="1">
    <source>
        <dbReference type="HAMAP-Rule" id="MF_00374"/>
    </source>
</evidence>
<evidence type="ECO:0000305" key="2"/>
<feature type="chain" id="PRO_1000121739" description="Large ribosomal subunit protein uL29">
    <location>
        <begin position="1"/>
        <end position="64"/>
    </location>
</feature>
<gene>
    <name evidence="1" type="primary">rpmC</name>
    <name type="ordered locus">BamMC406_0284</name>
</gene>